<reference key="1">
    <citation type="journal article" date="2008" name="BMC Genomics">
        <title>The genome of Aeromonas salmonicida subsp. salmonicida A449: insights into the evolution of a fish pathogen.</title>
        <authorList>
            <person name="Reith M.E."/>
            <person name="Singh R.K."/>
            <person name="Curtis B."/>
            <person name="Boyd J.M."/>
            <person name="Bouevitch A."/>
            <person name="Kimball J."/>
            <person name="Munholland J."/>
            <person name="Murphy C."/>
            <person name="Sarty D."/>
            <person name="Williams J."/>
            <person name="Nash J.H."/>
            <person name="Johnson S.C."/>
            <person name="Brown L.L."/>
        </authorList>
    </citation>
    <scope>NUCLEOTIDE SEQUENCE [LARGE SCALE GENOMIC DNA]</scope>
    <source>
        <strain>A449</strain>
    </source>
</reference>
<gene>
    <name evidence="1" type="primary">rimO</name>
    <name type="ordered locus">ASA_1327</name>
</gene>
<name>RIMO_AERS4</name>
<dbReference type="EC" id="2.8.4.4" evidence="1"/>
<dbReference type="EMBL" id="CP000644">
    <property type="protein sequence ID" value="ABO89429.1"/>
    <property type="molecule type" value="Genomic_DNA"/>
</dbReference>
<dbReference type="RefSeq" id="WP_005319357.1">
    <property type="nucleotide sequence ID" value="NC_009348.1"/>
</dbReference>
<dbReference type="SMR" id="A4SKK7"/>
<dbReference type="STRING" id="29491.GCA_000820065_03235"/>
<dbReference type="GeneID" id="79878979"/>
<dbReference type="KEGG" id="asa:ASA_1327"/>
<dbReference type="eggNOG" id="COG0621">
    <property type="taxonomic scope" value="Bacteria"/>
</dbReference>
<dbReference type="HOGENOM" id="CLU_018697_0_0_6"/>
<dbReference type="Proteomes" id="UP000000225">
    <property type="component" value="Chromosome"/>
</dbReference>
<dbReference type="GO" id="GO:0005829">
    <property type="term" value="C:cytosol"/>
    <property type="evidence" value="ECO:0007669"/>
    <property type="project" value="TreeGrafter"/>
</dbReference>
<dbReference type="GO" id="GO:0051539">
    <property type="term" value="F:4 iron, 4 sulfur cluster binding"/>
    <property type="evidence" value="ECO:0007669"/>
    <property type="project" value="UniProtKB-UniRule"/>
</dbReference>
<dbReference type="GO" id="GO:0035599">
    <property type="term" value="F:aspartic acid methylthiotransferase activity"/>
    <property type="evidence" value="ECO:0007669"/>
    <property type="project" value="TreeGrafter"/>
</dbReference>
<dbReference type="GO" id="GO:0046872">
    <property type="term" value="F:metal ion binding"/>
    <property type="evidence" value="ECO:0007669"/>
    <property type="project" value="UniProtKB-KW"/>
</dbReference>
<dbReference type="GO" id="GO:0103039">
    <property type="term" value="F:protein methylthiotransferase activity"/>
    <property type="evidence" value="ECO:0007669"/>
    <property type="project" value="UniProtKB-EC"/>
</dbReference>
<dbReference type="GO" id="GO:0006400">
    <property type="term" value="P:tRNA modification"/>
    <property type="evidence" value="ECO:0007669"/>
    <property type="project" value="InterPro"/>
</dbReference>
<dbReference type="CDD" id="cd01335">
    <property type="entry name" value="Radical_SAM"/>
    <property type="match status" value="1"/>
</dbReference>
<dbReference type="FunFam" id="2.40.50.140:FF:000060">
    <property type="entry name" value="Ribosomal protein S12 methylthiotransferase RimO"/>
    <property type="match status" value="1"/>
</dbReference>
<dbReference type="FunFam" id="3.40.50.12160:FF:000002">
    <property type="entry name" value="Ribosomal protein S12 methylthiotransferase RimO"/>
    <property type="match status" value="1"/>
</dbReference>
<dbReference type="FunFam" id="3.80.30.20:FF:000001">
    <property type="entry name" value="tRNA-2-methylthio-N(6)-dimethylallyladenosine synthase 2"/>
    <property type="match status" value="1"/>
</dbReference>
<dbReference type="Gene3D" id="3.40.50.12160">
    <property type="entry name" value="Methylthiotransferase, N-terminal domain"/>
    <property type="match status" value="1"/>
</dbReference>
<dbReference type="Gene3D" id="2.40.50.140">
    <property type="entry name" value="Nucleic acid-binding proteins"/>
    <property type="match status" value="1"/>
</dbReference>
<dbReference type="Gene3D" id="3.80.30.20">
    <property type="entry name" value="tm_1862 like domain"/>
    <property type="match status" value="1"/>
</dbReference>
<dbReference type="HAMAP" id="MF_01865">
    <property type="entry name" value="MTTase_RimO"/>
    <property type="match status" value="1"/>
</dbReference>
<dbReference type="InterPro" id="IPR006638">
    <property type="entry name" value="Elp3/MiaA/NifB-like_rSAM"/>
</dbReference>
<dbReference type="InterPro" id="IPR005839">
    <property type="entry name" value="Methylthiotransferase"/>
</dbReference>
<dbReference type="InterPro" id="IPR020612">
    <property type="entry name" value="Methylthiotransferase_CS"/>
</dbReference>
<dbReference type="InterPro" id="IPR013848">
    <property type="entry name" value="Methylthiotransferase_N"/>
</dbReference>
<dbReference type="InterPro" id="IPR038135">
    <property type="entry name" value="Methylthiotransferase_N_sf"/>
</dbReference>
<dbReference type="InterPro" id="IPR012340">
    <property type="entry name" value="NA-bd_OB-fold"/>
</dbReference>
<dbReference type="InterPro" id="IPR005840">
    <property type="entry name" value="Ribosomal_uS12_MeSTrfase_RimO"/>
</dbReference>
<dbReference type="InterPro" id="IPR007197">
    <property type="entry name" value="rSAM"/>
</dbReference>
<dbReference type="InterPro" id="IPR023404">
    <property type="entry name" value="rSAM_horseshoe"/>
</dbReference>
<dbReference type="InterPro" id="IPR002792">
    <property type="entry name" value="TRAM_dom"/>
</dbReference>
<dbReference type="NCBIfam" id="TIGR01125">
    <property type="entry name" value="30S ribosomal protein S12 methylthiotransferase RimO"/>
    <property type="match status" value="1"/>
</dbReference>
<dbReference type="NCBIfam" id="TIGR00089">
    <property type="entry name" value="MiaB/RimO family radical SAM methylthiotransferase"/>
    <property type="match status" value="1"/>
</dbReference>
<dbReference type="PANTHER" id="PTHR43837">
    <property type="entry name" value="RIBOSOMAL PROTEIN S12 METHYLTHIOTRANSFERASE RIMO"/>
    <property type="match status" value="1"/>
</dbReference>
<dbReference type="PANTHER" id="PTHR43837:SF1">
    <property type="entry name" value="RIBOSOMAL PROTEIN US12 METHYLTHIOTRANSFERASE RIMO"/>
    <property type="match status" value="1"/>
</dbReference>
<dbReference type="Pfam" id="PF04055">
    <property type="entry name" value="Radical_SAM"/>
    <property type="match status" value="1"/>
</dbReference>
<dbReference type="Pfam" id="PF18693">
    <property type="entry name" value="TRAM_2"/>
    <property type="match status" value="1"/>
</dbReference>
<dbReference type="Pfam" id="PF00919">
    <property type="entry name" value="UPF0004"/>
    <property type="match status" value="1"/>
</dbReference>
<dbReference type="SFLD" id="SFLDG01082">
    <property type="entry name" value="B12-binding_domain_containing"/>
    <property type="match status" value="1"/>
</dbReference>
<dbReference type="SFLD" id="SFLDS00029">
    <property type="entry name" value="Radical_SAM"/>
    <property type="match status" value="1"/>
</dbReference>
<dbReference type="SFLD" id="SFLDF00274">
    <property type="entry name" value="ribosomal_protein_S12_methylth"/>
    <property type="match status" value="1"/>
</dbReference>
<dbReference type="SMART" id="SM00729">
    <property type="entry name" value="Elp3"/>
    <property type="match status" value="1"/>
</dbReference>
<dbReference type="SUPFAM" id="SSF102114">
    <property type="entry name" value="Radical SAM enzymes"/>
    <property type="match status" value="1"/>
</dbReference>
<dbReference type="PROSITE" id="PS51449">
    <property type="entry name" value="MTTASE_N"/>
    <property type="match status" value="1"/>
</dbReference>
<dbReference type="PROSITE" id="PS01278">
    <property type="entry name" value="MTTASE_RADICAL"/>
    <property type="match status" value="1"/>
</dbReference>
<dbReference type="PROSITE" id="PS51918">
    <property type="entry name" value="RADICAL_SAM"/>
    <property type="match status" value="1"/>
</dbReference>
<dbReference type="PROSITE" id="PS50926">
    <property type="entry name" value="TRAM"/>
    <property type="match status" value="1"/>
</dbReference>
<accession>A4SKK7</accession>
<comment type="function">
    <text evidence="1">Catalyzes the methylthiolation of an aspartic acid residue of ribosomal protein uS12.</text>
</comment>
<comment type="catalytic activity">
    <reaction evidence="1">
        <text>L-aspartate(89)-[ribosomal protein uS12]-hydrogen + (sulfur carrier)-SH + AH2 + 2 S-adenosyl-L-methionine = 3-methylsulfanyl-L-aspartate(89)-[ribosomal protein uS12]-hydrogen + (sulfur carrier)-H + 5'-deoxyadenosine + L-methionine + A + S-adenosyl-L-homocysteine + 2 H(+)</text>
        <dbReference type="Rhea" id="RHEA:37087"/>
        <dbReference type="Rhea" id="RHEA-COMP:10460"/>
        <dbReference type="Rhea" id="RHEA-COMP:10461"/>
        <dbReference type="Rhea" id="RHEA-COMP:14737"/>
        <dbReference type="Rhea" id="RHEA-COMP:14739"/>
        <dbReference type="ChEBI" id="CHEBI:13193"/>
        <dbReference type="ChEBI" id="CHEBI:15378"/>
        <dbReference type="ChEBI" id="CHEBI:17319"/>
        <dbReference type="ChEBI" id="CHEBI:17499"/>
        <dbReference type="ChEBI" id="CHEBI:29917"/>
        <dbReference type="ChEBI" id="CHEBI:29961"/>
        <dbReference type="ChEBI" id="CHEBI:57844"/>
        <dbReference type="ChEBI" id="CHEBI:57856"/>
        <dbReference type="ChEBI" id="CHEBI:59789"/>
        <dbReference type="ChEBI" id="CHEBI:64428"/>
        <dbReference type="ChEBI" id="CHEBI:73599"/>
        <dbReference type="EC" id="2.8.4.4"/>
    </reaction>
</comment>
<comment type="cofactor">
    <cofactor evidence="1">
        <name>[4Fe-4S] cluster</name>
        <dbReference type="ChEBI" id="CHEBI:49883"/>
    </cofactor>
    <text evidence="1">Binds 2 [4Fe-4S] clusters. One cluster is coordinated with 3 cysteines and an exchangeable S-adenosyl-L-methionine.</text>
</comment>
<comment type="subcellular location">
    <subcellularLocation>
        <location evidence="1">Cytoplasm</location>
    </subcellularLocation>
</comment>
<comment type="similarity">
    <text evidence="1">Belongs to the methylthiotransferase family. RimO subfamily.</text>
</comment>
<proteinExistence type="inferred from homology"/>
<organism>
    <name type="scientific">Aeromonas salmonicida (strain A449)</name>
    <dbReference type="NCBI Taxonomy" id="382245"/>
    <lineage>
        <taxon>Bacteria</taxon>
        <taxon>Pseudomonadati</taxon>
        <taxon>Pseudomonadota</taxon>
        <taxon>Gammaproteobacteria</taxon>
        <taxon>Aeromonadales</taxon>
        <taxon>Aeromonadaceae</taxon>
        <taxon>Aeromonas</taxon>
    </lineage>
</organism>
<feature type="chain" id="PRO_0000374690" description="Ribosomal protein uS12 methylthiotransferase RimO">
    <location>
        <begin position="1"/>
        <end position="442"/>
    </location>
</feature>
<feature type="domain" description="MTTase N-terminal" evidence="1">
    <location>
        <begin position="8"/>
        <end position="118"/>
    </location>
</feature>
<feature type="domain" description="Radical SAM core" evidence="2">
    <location>
        <begin position="136"/>
        <end position="373"/>
    </location>
</feature>
<feature type="domain" description="TRAM" evidence="1">
    <location>
        <begin position="376"/>
        <end position="442"/>
    </location>
</feature>
<feature type="binding site" evidence="1">
    <location>
        <position position="17"/>
    </location>
    <ligand>
        <name>[4Fe-4S] cluster</name>
        <dbReference type="ChEBI" id="CHEBI:49883"/>
        <label>1</label>
    </ligand>
</feature>
<feature type="binding site" evidence="1">
    <location>
        <position position="53"/>
    </location>
    <ligand>
        <name>[4Fe-4S] cluster</name>
        <dbReference type="ChEBI" id="CHEBI:49883"/>
        <label>1</label>
    </ligand>
</feature>
<feature type="binding site" evidence="1">
    <location>
        <position position="82"/>
    </location>
    <ligand>
        <name>[4Fe-4S] cluster</name>
        <dbReference type="ChEBI" id="CHEBI:49883"/>
        <label>1</label>
    </ligand>
</feature>
<feature type="binding site" evidence="1">
    <location>
        <position position="150"/>
    </location>
    <ligand>
        <name>[4Fe-4S] cluster</name>
        <dbReference type="ChEBI" id="CHEBI:49883"/>
        <label>2</label>
        <note>4Fe-4S-S-AdoMet</note>
    </ligand>
</feature>
<feature type="binding site" evidence="1">
    <location>
        <position position="154"/>
    </location>
    <ligand>
        <name>[4Fe-4S] cluster</name>
        <dbReference type="ChEBI" id="CHEBI:49883"/>
        <label>2</label>
        <note>4Fe-4S-S-AdoMet</note>
    </ligand>
</feature>
<feature type="binding site" evidence="1">
    <location>
        <position position="157"/>
    </location>
    <ligand>
        <name>[4Fe-4S] cluster</name>
        <dbReference type="ChEBI" id="CHEBI:49883"/>
        <label>2</label>
        <note>4Fe-4S-S-AdoMet</note>
    </ligand>
</feature>
<evidence type="ECO:0000255" key="1">
    <source>
        <dbReference type="HAMAP-Rule" id="MF_01865"/>
    </source>
</evidence>
<evidence type="ECO:0000255" key="2">
    <source>
        <dbReference type="PROSITE-ProRule" id="PRU01266"/>
    </source>
</evidence>
<protein>
    <recommendedName>
        <fullName evidence="1">Ribosomal protein uS12 methylthiotransferase RimO</fullName>
        <shortName evidence="1">uS12 MTTase</shortName>
        <shortName evidence="1">uS12 methylthiotransferase</shortName>
        <ecNumber evidence="1">2.8.4.4</ecNumber>
    </recommendedName>
    <alternativeName>
        <fullName evidence="1">Ribosomal protein uS12 (aspartate-C(3))-methylthiotransferase</fullName>
    </alternativeName>
    <alternativeName>
        <fullName evidence="1">Ribosome maturation factor RimO</fullName>
    </alternativeName>
</protein>
<sequence>MSNTKQAPKVGFVSLGCPKNLVDSERILTQLRTEGYDVVPSYDDAELVVVNTCGFIDSAVQESLEAIGEALAENGKVIVTGCLGAKENQIREIHPKVLEITGPHAYEEVLGHVHKYVAKPTHNPFTSLVPAHGVKLTPRHYAYLKISEGCNHRCTFCIIPSMRGDLVSRPIGEVLAEAKRLKEAGVKEILVISQDTSAYGVDVKHRTGFYDGMPVKTSMVALCEELAKLDIWVRLHYVYPYPHVDDVIPLMRDGKVLPYLDIPLQHASPRILKLMKRPGTVERTLERIQKWREICPEITLRSTFIVGFPGETEEEFQMLLDFIDKAELDRVGCFKYSPVEGAKANELPDPVPEDVQEERFQRFMELQQQVSIRKLARKVGKEMTVLIDEVDEEGATGRSFADAPEIDGLVYLNGETDLKPGDLVKVRIDEADEYDLWASLIG</sequence>
<keyword id="KW-0004">4Fe-4S</keyword>
<keyword id="KW-0963">Cytoplasm</keyword>
<keyword id="KW-0408">Iron</keyword>
<keyword id="KW-0411">Iron-sulfur</keyword>
<keyword id="KW-0479">Metal-binding</keyword>
<keyword id="KW-0949">S-adenosyl-L-methionine</keyword>
<keyword id="KW-0808">Transferase</keyword>